<reference key="1">
    <citation type="submission" date="2009-06" db="EMBL/GenBank/DDBJ databases">
        <title>Complete sequence of chromosome of Geopacillus sp. WCH70.</title>
        <authorList>
            <consortium name="US DOE Joint Genome Institute"/>
            <person name="Lucas S."/>
            <person name="Copeland A."/>
            <person name="Lapidus A."/>
            <person name="Glavina del Rio T."/>
            <person name="Dalin E."/>
            <person name="Tice H."/>
            <person name="Bruce D."/>
            <person name="Goodwin L."/>
            <person name="Pitluck S."/>
            <person name="Chertkov O."/>
            <person name="Brettin T."/>
            <person name="Detter J.C."/>
            <person name="Han C."/>
            <person name="Larimer F."/>
            <person name="Land M."/>
            <person name="Hauser L."/>
            <person name="Kyrpides N."/>
            <person name="Mikhailova N."/>
            <person name="Brumm P."/>
            <person name="Mead D.A."/>
            <person name="Richardson P."/>
        </authorList>
    </citation>
    <scope>NUCLEOTIDE SEQUENCE [LARGE SCALE GENOMIC DNA]</scope>
    <source>
        <strain>WCH70</strain>
    </source>
</reference>
<keyword id="KW-0067">ATP-binding</keyword>
<keyword id="KW-0963">Cytoplasm</keyword>
<keyword id="KW-0418">Kinase</keyword>
<keyword id="KW-0460">Magnesium</keyword>
<keyword id="KW-0479">Metal-binding</keyword>
<keyword id="KW-0547">Nucleotide-binding</keyword>
<keyword id="KW-0808">Transferase</keyword>
<organism>
    <name type="scientific">Geobacillus sp. (strain WCH70)</name>
    <dbReference type="NCBI Taxonomy" id="471223"/>
    <lineage>
        <taxon>Bacteria</taxon>
        <taxon>Bacillati</taxon>
        <taxon>Bacillota</taxon>
        <taxon>Bacilli</taxon>
        <taxon>Bacillales</taxon>
        <taxon>Anoxybacillaceae</taxon>
        <taxon>Geobacillus</taxon>
    </lineage>
</organism>
<accession>C5D683</accession>
<comment type="function">
    <text evidence="1">Catalyzes the formation of acetyl phosphate from acetate and ATP. Can also catalyze the reverse reaction.</text>
</comment>
<comment type="catalytic activity">
    <reaction evidence="1">
        <text>acetate + ATP = acetyl phosphate + ADP</text>
        <dbReference type="Rhea" id="RHEA:11352"/>
        <dbReference type="ChEBI" id="CHEBI:22191"/>
        <dbReference type="ChEBI" id="CHEBI:30089"/>
        <dbReference type="ChEBI" id="CHEBI:30616"/>
        <dbReference type="ChEBI" id="CHEBI:456216"/>
        <dbReference type="EC" id="2.7.2.1"/>
    </reaction>
</comment>
<comment type="cofactor">
    <cofactor evidence="1">
        <name>Mg(2+)</name>
        <dbReference type="ChEBI" id="CHEBI:18420"/>
    </cofactor>
    <cofactor evidence="1">
        <name>Mn(2+)</name>
        <dbReference type="ChEBI" id="CHEBI:29035"/>
    </cofactor>
    <text evidence="1">Mg(2+). Can also accept Mn(2+).</text>
</comment>
<comment type="pathway">
    <text evidence="1">Metabolic intermediate biosynthesis; acetyl-CoA biosynthesis; acetyl-CoA from acetate: step 1/2.</text>
</comment>
<comment type="subunit">
    <text evidence="1">Homodimer.</text>
</comment>
<comment type="subcellular location">
    <subcellularLocation>
        <location evidence="1">Cytoplasm</location>
    </subcellularLocation>
</comment>
<comment type="similarity">
    <text evidence="1">Belongs to the acetokinase family.</text>
</comment>
<feature type="chain" id="PRO_1000201906" description="Acetate kinase">
    <location>
        <begin position="1"/>
        <end position="397"/>
    </location>
</feature>
<feature type="active site" description="Proton donor/acceptor" evidence="1">
    <location>
        <position position="146"/>
    </location>
</feature>
<feature type="binding site" evidence="1">
    <location>
        <position position="8"/>
    </location>
    <ligand>
        <name>Mg(2+)</name>
        <dbReference type="ChEBI" id="CHEBI:18420"/>
    </ligand>
</feature>
<feature type="binding site" evidence="1">
    <location>
        <position position="15"/>
    </location>
    <ligand>
        <name>ATP</name>
        <dbReference type="ChEBI" id="CHEBI:30616"/>
    </ligand>
</feature>
<feature type="binding site" evidence="1">
    <location>
        <position position="89"/>
    </location>
    <ligand>
        <name>substrate</name>
    </ligand>
</feature>
<feature type="binding site" evidence="1">
    <location>
        <begin position="206"/>
        <end position="210"/>
    </location>
    <ligand>
        <name>ATP</name>
        <dbReference type="ChEBI" id="CHEBI:30616"/>
    </ligand>
</feature>
<feature type="binding site" evidence="1">
    <location>
        <begin position="281"/>
        <end position="283"/>
    </location>
    <ligand>
        <name>ATP</name>
        <dbReference type="ChEBI" id="CHEBI:30616"/>
    </ligand>
</feature>
<feature type="binding site" evidence="1">
    <location>
        <begin position="329"/>
        <end position="333"/>
    </location>
    <ligand>
        <name>ATP</name>
        <dbReference type="ChEBI" id="CHEBI:30616"/>
    </ligand>
</feature>
<feature type="binding site" evidence="1">
    <location>
        <position position="382"/>
    </location>
    <ligand>
        <name>Mg(2+)</name>
        <dbReference type="ChEBI" id="CHEBI:18420"/>
    </ligand>
</feature>
<feature type="site" description="Transition state stabilizer" evidence="1">
    <location>
        <position position="178"/>
    </location>
</feature>
<feature type="site" description="Transition state stabilizer" evidence="1">
    <location>
        <position position="239"/>
    </location>
</feature>
<evidence type="ECO:0000255" key="1">
    <source>
        <dbReference type="HAMAP-Rule" id="MF_00020"/>
    </source>
</evidence>
<gene>
    <name evidence="1" type="primary">ackA</name>
    <name type="ordered locus">GWCH70_2708</name>
</gene>
<sequence>MSKILAINAGSSSLKFQLFEMPSETVLTKGIVERIGFDDAIFTITVNGEKIQEVTAIPNHAVAVKMLLDKLISHGIIRSFDEIDGIGHRVVHGGEKFSDSVLITDEVLKQIEEVSELAPLHNPANIVGIKAFQEVLPNVPAVAVFDTAFHQTMPEQSFLYSLPYEYYTKFGIRKYGFHGTSHKYVTQRAAELLGRPIEQLRLISCHLGNGASIAAVEGGKSIDTSMGFTPLAGVAMGTRSGNIDPALIPYIMQKTGMTADEVLEVLNKKSGMLGISGISSDLRDLEKAAAEGNKRAELALEVFANRIHKYIGSYAARMCGVDAIIFTAGIGENSEVIRAKVLRGLEFMGVYWDPALNKVRGKEAFISYPHSPVKVLVIPTNEEVMIARDVVRLANIG</sequence>
<protein>
    <recommendedName>
        <fullName evidence="1">Acetate kinase</fullName>
        <ecNumber evidence="1">2.7.2.1</ecNumber>
    </recommendedName>
    <alternativeName>
        <fullName evidence="1">Acetokinase</fullName>
    </alternativeName>
</protein>
<name>ACKA_GEOSW</name>
<proteinExistence type="inferred from homology"/>
<dbReference type="EC" id="2.7.2.1" evidence="1"/>
<dbReference type="EMBL" id="CP001638">
    <property type="protein sequence ID" value="ACS25399.1"/>
    <property type="molecule type" value="Genomic_DNA"/>
</dbReference>
<dbReference type="SMR" id="C5D683"/>
<dbReference type="STRING" id="471223.GWCH70_2708"/>
<dbReference type="KEGG" id="gwc:GWCH70_2708"/>
<dbReference type="eggNOG" id="COG0282">
    <property type="taxonomic scope" value="Bacteria"/>
</dbReference>
<dbReference type="HOGENOM" id="CLU_020352_0_1_9"/>
<dbReference type="OrthoDB" id="9802453at2"/>
<dbReference type="UniPathway" id="UPA00340">
    <property type="reaction ID" value="UER00458"/>
</dbReference>
<dbReference type="GO" id="GO:0005737">
    <property type="term" value="C:cytoplasm"/>
    <property type="evidence" value="ECO:0007669"/>
    <property type="project" value="UniProtKB-SubCell"/>
</dbReference>
<dbReference type="GO" id="GO:0008776">
    <property type="term" value="F:acetate kinase activity"/>
    <property type="evidence" value="ECO:0007669"/>
    <property type="project" value="UniProtKB-UniRule"/>
</dbReference>
<dbReference type="GO" id="GO:0005524">
    <property type="term" value="F:ATP binding"/>
    <property type="evidence" value="ECO:0007669"/>
    <property type="project" value="UniProtKB-KW"/>
</dbReference>
<dbReference type="GO" id="GO:0000287">
    <property type="term" value="F:magnesium ion binding"/>
    <property type="evidence" value="ECO:0007669"/>
    <property type="project" value="UniProtKB-UniRule"/>
</dbReference>
<dbReference type="GO" id="GO:0006083">
    <property type="term" value="P:acetate metabolic process"/>
    <property type="evidence" value="ECO:0007669"/>
    <property type="project" value="TreeGrafter"/>
</dbReference>
<dbReference type="GO" id="GO:0006085">
    <property type="term" value="P:acetyl-CoA biosynthetic process"/>
    <property type="evidence" value="ECO:0007669"/>
    <property type="project" value="UniProtKB-UniRule"/>
</dbReference>
<dbReference type="CDD" id="cd24010">
    <property type="entry name" value="ASKHA_NBD_AcK_PK"/>
    <property type="match status" value="1"/>
</dbReference>
<dbReference type="Gene3D" id="3.30.420.40">
    <property type="match status" value="2"/>
</dbReference>
<dbReference type="HAMAP" id="MF_00020">
    <property type="entry name" value="Acetate_kinase"/>
    <property type="match status" value="1"/>
</dbReference>
<dbReference type="InterPro" id="IPR004372">
    <property type="entry name" value="Ac/propionate_kinase"/>
</dbReference>
<dbReference type="InterPro" id="IPR000890">
    <property type="entry name" value="Aliphatic_acid_kin_short-chain"/>
</dbReference>
<dbReference type="InterPro" id="IPR023865">
    <property type="entry name" value="Aliphatic_acid_kinase_CS"/>
</dbReference>
<dbReference type="InterPro" id="IPR043129">
    <property type="entry name" value="ATPase_NBD"/>
</dbReference>
<dbReference type="NCBIfam" id="TIGR00016">
    <property type="entry name" value="ackA"/>
    <property type="match status" value="1"/>
</dbReference>
<dbReference type="PANTHER" id="PTHR21060">
    <property type="entry name" value="ACETATE KINASE"/>
    <property type="match status" value="1"/>
</dbReference>
<dbReference type="PANTHER" id="PTHR21060:SF15">
    <property type="entry name" value="ACETATE KINASE-RELATED"/>
    <property type="match status" value="1"/>
</dbReference>
<dbReference type="Pfam" id="PF00871">
    <property type="entry name" value="Acetate_kinase"/>
    <property type="match status" value="1"/>
</dbReference>
<dbReference type="PIRSF" id="PIRSF000722">
    <property type="entry name" value="Acetate_prop_kin"/>
    <property type="match status" value="1"/>
</dbReference>
<dbReference type="PRINTS" id="PR00471">
    <property type="entry name" value="ACETATEKNASE"/>
</dbReference>
<dbReference type="SUPFAM" id="SSF53067">
    <property type="entry name" value="Actin-like ATPase domain"/>
    <property type="match status" value="2"/>
</dbReference>
<dbReference type="PROSITE" id="PS01075">
    <property type="entry name" value="ACETATE_KINASE_1"/>
    <property type="match status" value="1"/>
</dbReference>
<dbReference type="PROSITE" id="PS01076">
    <property type="entry name" value="ACETATE_KINASE_2"/>
    <property type="match status" value="1"/>
</dbReference>